<reference key="1">
    <citation type="submission" date="2005-05" db="EMBL/GenBank/DDBJ databases">
        <title>Cloning of P5 from rat small intestine.</title>
        <authorList>
            <person name="Fernandes C."/>
            <person name="Geyer J."/>
            <person name="Petzinger E."/>
        </authorList>
    </citation>
    <scope>NUCLEOTIDE SEQUENCE [MRNA]</scope>
    <source>
        <strain>Wistar</strain>
        <tissue>Small intestine</tissue>
    </source>
</reference>
<dbReference type="EMBL" id="DQ074435">
    <property type="protein sequence ID" value="AAY85181.1"/>
    <property type="molecule type" value="mRNA"/>
</dbReference>
<dbReference type="RefSeq" id="NP_001020451.1">
    <property type="nucleotide sequence ID" value="NM_001025280.1"/>
</dbReference>
<dbReference type="SMR" id="Q4JLT5"/>
<dbReference type="FunCoup" id="Q4JLT5">
    <property type="interactions" value="44"/>
</dbReference>
<dbReference type="IntAct" id="Q4JLT5">
    <property type="interactions" value="1"/>
</dbReference>
<dbReference type="STRING" id="10116.ENSRNOP00000051406"/>
<dbReference type="GlyCosmos" id="Q4JLT5">
    <property type="glycosylation" value="2 sites, No reported glycans"/>
</dbReference>
<dbReference type="GlyGen" id="Q4JLT5">
    <property type="glycosylation" value="2 sites"/>
</dbReference>
<dbReference type="iPTMnet" id="Q4JLT5"/>
<dbReference type="PhosphoSitePlus" id="Q4JLT5"/>
<dbReference type="PaxDb" id="10116-ENSRNOP00000051406"/>
<dbReference type="GeneID" id="310230"/>
<dbReference type="KEGG" id="rno:310230"/>
<dbReference type="UCSC" id="RGD:1306036">
    <property type="organism name" value="rat"/>
</dbReference>
<dbReference type="AGR" id="RGD:1306036"/>
<dbReference type="CTD" id="347051"/>
<dbReference type="RGD" id="1306036">
    <property type="gene designation" value="Slc10a5"/>
</dbReference>
<dbReference type="eggNOG" id="KOG2718">
    <property type="taxonomic scope" value="Eukaryota"/>
</dbReference>
<dbReference type="InParanoid" id="Q4JLT5"/>
<dbReference type="OrthoDB" id="81470at9989"/>
<dbReference type="PhylomeDB" id="Q4JLT5"/>
<dbReference type="PRO" id="PR:Q4JLT5"/>
<dbReference type="Proteomes" id="UP000002494">
    <property type="component" value="Unplaced"/>
</dbReference>
<dbReference type="GO" id="GO:0016020">
    <property type="term" value="C:membrane"/>
    <property type="evidence" value="ECO:0007669"/>
    <property type="project" value="UniProtKB-SubCell"/>
</dbReference>
<dbReference type="GO" id="GO:0008508">
    <property type="term" value="F:bile acid:sodium symporter activity"/>
    <property type="evidence" value="ECO:0000318"/>
    <property type="project" value="GO_Central"/>
</dbReference>
<dbReference type="GO" id="GO:0015721">
    <property type="term" value="P:bile acid and bile salt transport"/>
    <property type="evidence" value="ECO:0000318"/>
    <property type="project" value="GO_Central"/>
</dbReference>
<dbReference type="Gene3D" id="1.20.1530.20">
    <property type="match status" value="1"/>
</dbReference>
<dbReference type="InterPro" id="IPR002657">
    <property type="entry name" value="BilAc:Na_symport/Acr3"/>
</dbReference>
<dbReference type="InterPro" id="IPR004710">
    <property type="entry name" value="Bilac:Na_transpt"/>
</dbReference>
<dbReference type="InterPro" id="IPR038770">
    <property type="entry name" value="Na+/solute_symporter_sf"/>
</dbReference>
<dbReference type="PANTHER" id="PTHR10361">
    <property type="entry name" value="SODIUM-BILE ACID COTRANSPORTER"/>
    <property type="match status" value="1"/>
</dbReference>
<dbReference type="PANTHER" id="PTHR10361:SF29">
    <property type="entry name" value="SODIUM_BILE ACID COTRANSPORTER 5"/>
    <property type="match status" value="1"/>
</dbReference>
<dbReference type="Pfam" id="PF24690">
    <property type="entry name" value="NTCP5_P3_N"/>
    <property type="match status" value="1"/>
</dbReference>
<dbReference type="Pfam" id="PF01758">
    <property type="entry name" value="SBF"/>
    <property type="match status" value="1"/>
</dbReference>
<accession>Q4JLT5</accession>
<evidence type="ECO:0000255" key="1"/>
<evidence type="ECO:0000305" key="2"/>
<keyword id="KW-0325">Glycoprotein</keyword>
<keyword id="KW-0406">Ion transport</keyword>
<keyword id="KW-0472">Membrane</keyword>
<keyword id="KW-1185">Reference proteome</keyword>
<keyword id="KW-0732">Signal</keyword>
<keyword id="KW-0915">Sodium</keyword>
<keyword id="KW-0739">Sodium transport</keyword>
<keyword id="KW-0769">Symport</keyword>
<keyword id="KW-0812">Transmembrane</keyword>
<keyword id="KW-1133">Transmembrane helix</keyword>
<keyword id="KW-0813">Transport</keyword>
<organism>
    <name type="scientific">Rattus norvegicus</name>
    <name type="common">Rat</name>
    <dbReference type="NCBI Taxonomy" id="10116"/>
    <lineage>
        <taxon>Eukaryota</taxon>
        <taxon>Metazoa</taxon>
        <taxon>Chordata</taxon>
        <taxon>Craniata</taxon>
        <taxon>Vertebrata</taxon>
        <taxon>Euteleostomi</taxon>
        <taxon>Mammalia</taxon>
        <taxon>Eutheria</taxon>
        <taxon>Euarchontoglires</taxon>
        <taxon>Glires</taxon>
        <taxon>Rodentia</taxon>
        <taxon>Myomorpha</taxon>
        <taxon>Muroidea</taxon>
        <taxon>Muridae</taxon>
        <taxon>Murinae</taxon>
        <taxon>Rattus</taxon>
    </lineage>
</organism>
<feature type="signal peptide" evidence="1">
    <location>
        <begin position="1"/>
        <end position="18"/>
    </location>
</feature>
<feature type="chain" id="PRO_0000263747" description="Sodium/bile acid cotransporter 5">
    <location>
        <begin position="19"/>
        <end position="434"/>
    </location>
</feature>
<feature type="topological domain" description="Extracellular" evidence="1">
    <location>
        <begin position="19"/>
        <end position="129"/>
    </location>
</feature>
<feature type="transmembrane region" description="Helical" evidence="1">
    <location>
        <begin position="130"/>
        <end position="150"/>
    </location>
</feature>
<feature type="topological domain" description="Cytoplasmic" evidence="1">
    <location>
        <begin position="151"/>
        <end position="172"/>
    </location>
</feature>
<feature type="transmembrane region" description="Helical" evidence="1">
    <location>
        <begin position="173"/>
        <end position="193"/>
    </location>
</feature>
<feature type="topological domain" description="Extracellular" evidence="1">
    <location>
        <begin position="194"/>
        <end position="195"/>
    </location>
</feature>
<feature type="transmembrane region" description="Helical" evidence="1">
    <location>
        <begin position="196"/>
        <end position="216"/>
    </location>
</feature>
<feature type="topological domain" description="Cytoplasmic" evidence="1">
    <location>
        <begin position="217"/>
        <end position="232"/>
    </location>
</feature>
<feature type="transmembrane region" description="Helical" evidence="1">
    <location>
        <begin position="233"/>
        <end position="255"/>
    </location>
</feature>
<feature type="topological domain" description="Extracellular" evidence="1">
    <location>
        <begin position="256"/>
        <end position="268"/>
    </location>
</feature>
<feature type="transmembrane region" description="Helical" evidence="1">
    <location>
        <begin position="269"/>
        <end position="289"/>
    </location>
</feature>
<feature type="topological domain" description="Cytoplasmic" evidence="1">
    <location>
        <begin position="290"/>
        <end position="306"/>
    </location>
</feature>
<feature type="transmembrane region" description="Helical" evidence="1">
    <location>
        <begin position="307"/>
        <end position="327"/>
    </location>
</feature>
<feature type="topological domain" description="Extracellular" evidence="1">
    <location>
        <begin position="328"/>
        <end position="331"/>
    </location>
</feature>
<feature type="transmembrane region" description="Helical" evidence="1">
    <location>
        <begin position="332"/>
        <end position="352"/>
    </location>
</feature>
<feature type="topological domain" description="Cytoplasmic" evidence="1">
    <location>
        <begin position="353"/>
        <end position="365"/>
    </location>
</feature>
<feature type="transmembrane region" description="Helical" evidence="1">
    <location>
        <begin position="366"/>
        <end position="386"/>
    </location>
</feature>
<feature type="topological domain" description="Extracellular" evidence="1">
    <location>
        <begin position="387"/>
        <end position="395"/>
    </location>
</feature>
<feature type="transmembrane region" description="Helical" evidence="1">
    <location>
        <begin position="396"/>
        <end position="416"/>
    </location>
</feature>
<feature type="topological domain" description="Cytoplasmic" evidence="1">
    <location>
        <begin position="417"/>
        <end position="434"/>
    </location>
</feature>
<feature type="glycosylation site" description="N-linked (GlcNAc...) asparagine" evidence="1">
    <location>
        <position position="73"/>
    </location>
</feature>
<feature type="glycosylation site" description="N-linked (GlcNAc...) asparagine" evidence="1">
    <location>
        <position position="96"/>
    </location>
</feature>
<proteinExistence type="evidence at transcript level"/>
<name>NTCP5_RAT</name>
<sequence length="434" mass="48076">MSGKLFIILLLLVTPGEARKSFLRFLNIQNPEMLSFTKPEETVIVRSSYEGKRPHSSYLLVKLEDPTVLQVVNVTKTSLDFTDFTINLKTFPGETNLTMQLWESEGRQTRLIEEITNIRVSVFRQTEDSLFQEPIHVNSSVFLLVLLMILLNKCAFGCKIELQVLQTVWKRPLPILLGAVTQFFLMPFCGFLLSQILGLSKAQAFGFVMTCTCPGGGGGYLFALLLEGDVTLAILMACTSTSLALIMMPVNSYLYSCLLGLAGVFHVPVLKIVSTLLFILTPVSIGIVIKHRMPKKAVCLERVVQPLSLTLMLVGVYLAFRMGLVFLRMANLEVFLLGLLVPVLGFSFGYSFAKVYLLPLPVCKTVAIESGMLNSFLALAIIQLSFPQSKAYEASVAPFTVAMCSSCEMLLLLLVYKAKKRPLLSTENEKAPLV</sequence>
<comment type="subcellular location">
    <subcellularLocation>
        <location evidence="2">Membrane</location>
        <topology evidence="2">Multi-pass membrane protein</topology>
    </subcellularLocation>
</comment>
<comment type="similarity">
    <text evidence="2">Belongs to the bile acid:sodium symporter (BASS) (TC 2.A.28) family.</text>
</comment>
<protein>
    <recommendedName>
        <fullName>Sodium/bile acid cotransporter 5</fullName>
    </recommendedName>
    <alternativeName>
        <fullName>Na(+)/bile acid cotransporter 5</fullName>
    </alternativeName>
    <alternativeName>
        <fullName>Solute carrier family 10 member 5</fullName>
    </alternativeName>
</protein>
<gene>
    <name type="primary">Slc10a5</name>
    <name type="synonym">P5</name>
</gene>